<dbReference type="EC" id="3.4.17.21"/>
<dbReference type="EMBL" id="AF026380">
    <property type="protein sequence ID" value="AAB81971.1"/>
    <property type="molecule type" value="mRNA"/>
</dbReference>
<dbReference type="EMBL" id="AK002920">
    <property type="protein sequence ID" value="BAB22457.1"/>
    <property type="molecule type" value="mRNA"/>
</dbReference>
<dbReference type="EMBL" id="BC119605">
    <property type="protein sequence ID" value="AAI19606.1"/>
    <property type="molecule type" value="mRNA"/>
</dbReference>
<dbReference type="CCDS" id="CCDS21436.1"/>
<dbReference type="RefSeq" id="NP_001153178.1">
    <property type="nucleotide sequence ID" value="NM_001159706.1"/>
</dbReference>
<dbReference type="RefSeq" id="NP_058050.3">
    <property type="nucleotide sequence ID" value="NM_016770.3"/>
</dbReference>
<dbReference type="SMR" id="O35409"/>
<dbReference type="FunCoup" id="O35409">
    <property type="interactions" value="125"/>
</dbReference>
<dbReference type="STRING" id="10090.ENSMUSP00000001824"/>
<dbReference type="MEROPS" id="M28.010"/>
<dbReference type="GlyConnect" id="2340">
    <property type="glycosylation" value="7 N-Linked glycans (6 sites)"/>
</dbReference>
<dbReference type="GlyCosmos" id="O35409">
    <property type="glycosylation" value="9 sites, 7 glycans"/>
</dbReference>
<dbReference type="GlyGen" id="O35409">
    <property type="glycosylation" value="10 sites, 14 N-linked glycans (8 sites), 1 O-linked glycan (1 site)"/>
</dbReference>
<dbReference type="iPTMnet" id="O35409"/>
<dbReference type="PhosphoSitePlus" id="O35409"/>
<dbReference type="jPOST" id="O35409"/>
<dbReference type="PaxDb" id="10090-ENSMUSP00000001824"/>
<dbReference type="PeptideAtlas" id="O35409"/>
<dbReference type="ProteomicsDB" id="271789"/>
<dbReference type="Antibodypedia" id="2262">
    <property type="antibodies" value="1434 antibodies from 41 providers"/>
</dbReference>
<dbReference type="DNASU" id="53320"/>
<dbReference type="Ensembl" id="ENSMUST00000001824.7">
    <property type="protein sequence ID" value="ENSMUSP00000001824.6"/>
    <property type="gene ID" value="ENSMUSG00000001773.15"/>
</dbReference>
<dbReference type="GeneID" id="53320"/>
<dbReference type="KEGG" id="mmu:53320"/>
<dbReference type="UCSC" id="uc009ifh.2">
    <property type="organism name" value="mouse"/>
</dbReference>
<dbReference type="AGR" id="MGI:1858193"/>
<dbReference type="CTD" id="2346"/>
<dbReference type="MGI" id="MGI:1858193">
    <property type="gene designation" value="Folh1"/>
</dbReference>
<dbReference type="VEuPathDB" id="HostDB:ENSMUSG00000001773"/>
<dbReference type="eggNOG" id="KOG2195">
    <property type="taxonomic scope" value="Eukaryota"/>
</dbReference>
<dbReference type="GeneTree" id="ENSGT01030000234598"/>
<dbReference type="InParanoid" id="O35409"/>
<dbReference type="OMA" id="LWNVIGT"/>
<dbReference type="OrthoDB" id="5841748at2759"/>
<dbReference type="PhylomeDB" id="O35409"/>
<dbReference type="TreeFam" id="TF312981"/>
<dbReference type="BRENDA" id="3.4.17.21">
    <property type="organism ID" value="3474"/>
</dbReference>
<dbReference type="Reactome" id="R-MMU-8963693">
    <property type="pathway name" value="Aspartate and asparagine metabolism"/>
</dbReference>
<dbReference type="BioGRID-ORCS" id="53320">
    <property type="hits" value="4 hits in 81 CRISPR screens"/>
</dbReference>
<dbReference type="PRO" id="PR:O35409"/>
<dbReference type="Proteomes" id="UP000000589">
    <property type="component" value="Chromosome 7"/>
</dbReference>
<dbReference type="RNAct" id="O35409">
    <property type="molecule type" value="protein"/>
</dbReference>
<dbReference type="Bgee" id="ENSMUSG00000001773">
    <property type="expression patterns" value="Expressed in right kidney and 63 other cell types or tissues"/>
</dbReference>
<dbReference type="ExpressionAtlas" id="O35409">
    <property type="expression patterns" value="baseline and differential"/>
</dbReference>
<dbReference type="GO" id="GO:0009986">
    <property type="term" value="C:cell surface"/>
    <property type="evidence" value="ECO:0007669"/>
    <property type="project" value="Ensembl"/>
</dbReference>
<dbReference type="GO" id="GO:0016020">
    <property type="term" value="C:membrane"/>
    <property type="evidence" value="ECO:0000314"/>
    <property type="project" value="MGI"/>
</dbReference>
<dbReference type="GO" id="GO:0005886">
    <property type="term" value="C:plasma membrane"/>
    <property type="evidence" value="ECO:0000314"/>
    <property type="project" value="MGI"/>
</dbReference>
<dbReference type="GO" id="GO:1904492">
    <property type="term" value="F:Ac-Asp-Glu binding"/>
    <property type="evidence" value="ECO:0007669"/>
    <property type="project" value="Ensembl"/>
</dbReference>
<dbReference type="GO" id="GO:0004180">
    <property type="term" value="F:carboxypeptidase activity"/>
    <property type="evidence" value="ECO:0000314"/>
    <property type="project" value="MGI"/>
</dbReference>
<dbReference type="GO" id="GO:0016805">
    <property type="term" value="F:dipeptidase activity"/>
    <property type="evidence" value="ECO:0000314"/>
    <property type="project" value="MGI"/>
</dbReference>
<dbReference type="GO" id="GO:0046872">
    <property type="term" value="F:metal ion binding"/>
    <property type="evidence" value="ECO:0007669"/>
    <property type="project" value="UniProtKB-KW"/>
</dbReference>
<dbReference type="GO" id="GO:0004181">
    <property type="term" value="F:metallocarboxypeptidase activity"/>
    <property type="evidence" value="ECO:0007669"/>
    <property type="project" value="UniProtKB-EC"/>
</dbReference>
<dbReference type="GO" id="GO:0008233">
    <property type="term" value="F:peptidase activity"/>
    <property type="evidence" value="ECO:0000314"/>
    <property type="project" value="MGI"/>
</dbReference>
<dbReference type="GO" id="GO:1904493">
    <property type="term" value="F:tetrahydrofolyl-poly(glutamate) polymer binding"/>
    <property type="evidence" value="ECO:0007669"/>
    <property type="project" value="Ensembl"/>
</dbReference>
<dbReference type="GO" id="GO:0006760">
    <property type="term" value="P:folic acid-containing compound metabolic process"/>
    <property type="evidence" value="ECO:0000314"/>
    <property type="project" value="MGI"/>
</dbReference>
<dbReference type="GO" id="GO:0006508">
    <property type="term" value="P:proteolysis"/>
    <property type="evidence" value="ECO:0000314"/>
    <property type="project" value="MGI"/>
</dbReference>
<dbReference type="CDD" id="cd08022">
    <property type="entry name" value="M28_PSMA_like"/>
    <property type="match status" value="1"/>
</dbReference>
<dbReference type="CDD" id="cd02121">
    <property type="entry name" value="PA_GCPII_like"/>
    <property type="match status" value="1"/>
</dbReference>
<dbReference type="FunFam" id="1.20.930.40:FF:000001">
    <property type="entry name" value="N-acetylated-alpha-linked acidic dipeptidase 2"/>
    <property type="match status" value="1"/>
</dbReference>
<dbReference type="FunFam" id="3.40.630.10:FF:000009">
    <property type="entry name" value="N-acetylated-alpha-linked acidic dipeptidase 2"/>
    <property type="match status" value="1"/>
</dbReference>
<dbReference type="FunFam" id="3.50.30.30:FF:000002">
    <property type="entry name" value="N-acetylated-alpha-linked acidic dipeptidase 2"/>
    <property type="match status" value="1"/>
</dbReference>
<dbReference type="Gene3D" id="3.50.30.30">
    <property type="match status" value="1"/>
</dbReference>
<dbReference type="Gene3D" id="1.20.930.40">
    <property type="entry name" value="Transferrin receptor-like, dimerisation domain"/>
    <property type="match status" value="1"/>
</dbReference>
<dbReference type="Gene3D" id="3.40.630.10">
    <property type="entry name" value="Zn peptidases"/>
    <property type="match status" value="1"/>
</dbReference>
<dbReference type="InterPro" id="IPR046450">
    <property type="entry name" value="PA_dom_sf"/>
</dbReference>
<dbReference type="InterPro" id="IPR003137">
    <property type="entry name" value="PA_domain"/>
</dbReference>
<dbReference type="InterPro" id="IPR007484">
    <property type="entry name" value="Peptidase_M28"/>
</dbReference>
<dbReference type="InterPro" id="IPR039373">
    <property type="entry name" value="Peptidase_M28B"/>
</dbReference>
<dbReference type="InterPro" id="IPR007365">
    <property type="entry name" value="TFR-like_dimer_dom"/>
</dbReference>
<dbReference type="InterPro" id="IPR036757">
    <property type="entry name" value="TFR-like_dimer_dom_sf"/>
</dbReference>
<dbReference type="PANTHER" id="PTHR10404:SF36">
    <property type="entry name" value="GLUTAMATE CARBOXYPEPTIDASE 2"/>
    <property type="match status" value="1"/>
</dbReference>
<dbReference type="PANTHER" id="PTHR10404">
    <property type="entry name" value="N-ACETYLATED-ALPHA-LINKED ACIDIC DIPEPTIDASE"/>
    <property type="match status" value="1"/>
</dbReference>
<dbReference type="Pfam" id="PF02225">
    <property type="entry name" value="PA"/>
    <property type="match status" value="1"/>
</dbReference>
<dbReference type="Pfam" id="PF04389">
    <property type="entry name" value="Peptidase_M28"/>
    <property type="match status" value="1"/>
</dbReference>
<dbReference type="Pfam" id="PF04253">
    <property type="entry name" value="TFR_dimer"/>
    <property type="match status" value="1"/>
</dbReference>
<dbReference type="SUPFAM" id="SSF52025">
    <property type="entry name" value="PA domain"/>
    <property type="match status" value="1"/>
</dbReference>
<dbReference type="SUPFAM" id="SSF47672">
    <property type="entry name" value="Transferrin receptor-like dimerisation domain"/>
    <property type="match status" value="1"/>
</dbReference>
<dbReference type="SUPFAM" id="SSF53187">
    <property type="entry name" value="Zn-dependent exopeptidases"/>
    <property type="match status" value="1"/>
</dbReference>
<gene>
    <name type="primary">Folh1</name>
    <name type="synonym">Mopsm</name>
    <name type="synonym">Naalad1</name>
</gene>
<feature type="chain" id="PRO_0000174118" description="Glutamate carboxypeptidase 2">
    <location>
        <begin position="1"/>
        <end position="752"/>
    </location>
</feature>
<feature type="topological domain" description="Cytoplasmic" evidence="5">
    <location>
        <begin position="1"/>
        <end position="22"/>
    </location>
</feature>
<feature type="transmembrane region" description="Helical; Signal-anchor for type II membrane protein" evidence="5">
    <location>
        <begin position="23"/>
        <end position="44"/>
    </location>
</feature>
<feature type="topological domain" description="Extracellular" evidence="5">
    <location>
        <begin position="45"/>
        <end position="752"/>
    </location>
</feature>
<feature type="region of interest" description="NAALADase">
    <location>
        <begin position="276"/>
        <end position="589"/>
    </location>
</feature>
<feature type="active site" description="Nucleophile; for NAALADase activity" evidence="1">
    <location>
        <position position="426"/>
    </location>
</feature>
<feature type="active site" description="Charge relay system" evidence="5">
    <location>
        <position position="630"/>
    </location>
</feature>
<feature type="active site" description="Charge relay system" evidence="5">
    <location>
        <position position="668"/>
    </location>
</feature>
<feature type="active site" description="Charge relay system" evidence="5">
    <location>
        <position position="691"/>
    </location>
</feature>
<feature type="binding site" evidence="4">
    <location>
        <position position="212"/>
    </location>
    <ligand>
        <name>substrate</name>
    </ligand>
</feature>
<feature type="binding site" evidence="4">
    <location>
        <position position="259"/>
    </location>
    <ligand>
        <name>substrate</name>
    </ligand>
</feature>
<feature type="binding site" evidence="3">
    <location>
        <position position="271"/>
    </location>
    <ligand>
        <name>Ca(2+)</name>
        <dbReference type="ChEBI" id="CHEBI:29108"/>
    </ligand>
</feature>
<feature type="binding site" evidence="3">
    <location>
        <position position="274"/>
    </location>
    <ligand>
        <name>Ca(2+)</name>
        <dbReference type="ChEBI" id="CHEBI:29108"/>
    </ligand>
</feature>
<feature type="binding site" evidence="4">
    <location>
        <position position="379"/>
    </location>
    <ligand>
        <name>Zn(2+)</name>
        <dbReference type="ChEBI" id="CHEBI:29105"/>
        <label>1</label>
        <note>catalytic</note>
    </ligand>
</feature>
<feature type="binding site" evidence="4">
    <location>
        <position position="389"/>
    </location>
    <ligand>
        <name>Zn(2+)</name>
        <dbReference type="ChEBI" id="CHEBI:29105"/>
        <label>1</label>
        <note>catalytic</note>
    </ligand>
</feature>
<feature type="binding site" evidence="3">
    <location>
        <position position="389"/>
    </location>
    <ligand>
        <name>Zn(2+)</name>
        <dbReference type="ChEBI" id="CHEBI:29105"/>
        <label>2</label>
    </ligand>
</feature>
<feature type="binding site" evidence="4">
    <location>
        <position position="426"/>
    </location>
    <ligand>
        <name>substrate</name>
    </ligand>
</feature>
<feature type="binding site" evidence="3">
    <location>
        <position position="427"/>
    </location>
    <ligand>
        <name>Zn(2+)</name>
        <dbReference type="ChEBI" id="CHEBI:29105"/>
        <label>2</label>
    </ligand>
</feature>
<feature type="binding site" evidence="3">
    <location>
        <position position="435"/>
    </location>
    <ligand>
        <name>Ca(2+)</name>
        <dbReference type="ChEBI" id="CHEBI:29108"/>
    </ligand>
</feature>
<feature type="binding site" evidence="3">
    <location>
        <position position="438"/>
    </location>
    <ligand>
        <name>Ca(2+)</name>
        <dbReference type="ChEBI" id="CHEBI:29108"/>
    </ligand>
</feature>
<feature type="binding site" evidence="4">
    <location>
        <position position="455"/>
    </location>
    <ligand>
        <name>Zn(2+)</name>
        <dbReference type="ChEBI" id="CHEBI:29105"/>
        <label>1</label>
        <note>catalytic</note>
    </ligand>
</feature>
<feature type="binding site" evidence="4">
    <location>
        <begin position="519"/>
        <end position="520"/>
    </location>
    <ligand>
        <name>substrate</name>
    </ligand>
</feature>
<feature type="binding site" evidence="3">
    <location>
        <position position="521"/>
    </location>
    <ligand>
        <name>substrate</name>
    </ligand>
</feature>
<feature type="binding site" evidence="3">
    <location>
        <begin position="536"/>
        <end position="538"/>
    </location>
    <ligand>
        <name>substrate</name>
    </ligand>
</feature>
<feature type="binding site" evidence="4">
    <location>
        <begin position="554"/>
        <end position="555"/>
    </location>
    <ligand>
        <name>substrate</name>
    </ligand>
</feature>
<feature type="binding site" evidence="3">
    <location>
        <position position="554"/>
    </location>
    <ligand>
        <name>substrate</name>
    </ligand>
</feature>
<feature type="binding site" evidence="3">
    <location>
        <position position="555"/>
    </location>
    <ligand>
        <name>Zn(2+)</name>
        <dbReference type="ChEBI" id="CHEBI:29105"/>
        <label>2</label>
    </ligand>
</feature>
<feature type="binding site" evidence="4">
    <location>
        <begin position="701"/>
        <end position="702"/>
    </location>
    <ligand>
        <name>substrate</name>
    </ligand>
</feature>
<feature type="modified residue" description="Phosphoserine" evidence="2">
    <location>
        <position position="10"/>
    </location>
</feature>
<feature type="glycosylation site" description="N-linked (GlcNAc...) asparagine" evidence="3">
    <location>
        <position position="78"/>
    </location>
</feature>
<feature type="glycosylation site" description="N-linked (GlcNAc...) asparagine" evidence="3">
    <location>
        <position position="123"/>
    </location>
</feature>
<feature type="glycosylation site" description="N-linked (GlcNAc...) asparagine" evidence="3">
    <location>
        <position position="155"/>
    </location>
</feature>
<feature type="glycosylation site" description="N-linked (GlcNAc...) asparagine" evidence="3">
    <location>
        <position position="338"/>
    </location>
</feature>
<feature type="glycosylation site" description="N-linked (GlcNAc...) asparagine" evidence="3">
    <location>
        <position position="461"/>
    </location>
</feature>
<feature type="glycosylation site" description="N-linked (GlcNAc...) asparagine" evidence="3">
    <location>
        <position position="478"/>
    </location>
</feature>
<feature type="glycosylation site" description="N-linked (GlcNAc...) asparagine" evidence="5">
    <location>
        <position position="615"/>
    </location>
</feature>
<feature type="glycosylation site" description="N-linked (GlcNAc...) asparagine" evidence="3">
    <location>
        <position position="640"/>
    </location>
</feature>
<feature type="glycosylation site" description="N-linked (GlcNAc...) asparagine" evidence="5">
    <location>
        <position position="722"/>
    </location>
</feature>
<feature type="sequence conflict" description="In Ref. 2; BAB22457." evidence="6" ref="2">
    <original>F</original>
    <variation>S</variation>
    <location>
        <position position="141"/>
    </location>
</feature>
<feature type="sequence conflict" description="In Ref. 1; AAB81971." evidence="6" ref="1">
    <original>Y</original>
    <variation>F</variation>
    <location>
        <position position="178"/>
    </location>
</feature>
<feature type="sequence conflict" description="In Ref. 1; AAB81971." evidence="6" ref="1">
    <original>A</original>
    <variation>V</variation>
    <location>
        <position position="219"/>
    </location>
</feature>
<feature type="sequence conflict" description="In Ref. 1; AAB81971." evidence="6" ref="1">
    <original>A</original>
    <variation>G</variation>
    <location>
        <position position="240"/>
    </location>
</feature>
<feature type="sequence conflict" description="In Ref. 1; AAB81971." evidence="6" ref="1">
    <original>N</original>
    <variation>E</variation>
    <location>
        <position position="287"/>
    </location>
</feature>
<feature type="sequence conflict" description="In Ref. 1; AAB81971." evidence="6" ref="1">
    <original>G</original>
    <variation>R</variation>
    <location>
        <position position="583"/>
    </location>
</feature>
<feature type="sequence conflict" description="In Ref. 1; AAB81971." evidence="6" ref="1">
    <original>K</original>
    <variation>E</variation>
    <location>
        <position position="625"/>
    </location>
</feature>
<feature type="sequence conflict" description="In Ref. 1; AAB81971." evidence="6" ref="1">
    <original>N</original>
    <variation>S</variation>
    <location>
        <position position="728"/>
    </location>
</feature>
<feature type="sequence conflict" description="In Ref. 1; AAB81971." evidence="6" ref="1">
    <original>R</original>
    <variation>M</variation>
    <location>
        <position position="749"/>
    </location>
</feature>
<comment type="function">
    <text evidence="1">Has both folate hydrolase and N-acetylated-alpha-linked-acidic dipeptidase (NAALADase) activity. Has a preference for tri-alpha-glutamate peptides (By similarity). In the intestine, required for the uptake of folate. In the brain, modulates excitatory neurotransmission through the hydrolysis of the neuropeptide, N-aceylaspartylglutamate (NAAG), thereby releasing glutamate.</text>
</comment>
<comment type="function">
    <text evidence="1">Also exhibits a dipeptidyl-peptidase IV type activity. In vitro, cleaves Gly-Pro-AMC.</text>
</comment>
<comment type="catalytic activity">
    <reaction>
        <text>Release of an unsubstituted, C-terminal glutamyl residue, typically from Ac-Asp-Glu or folylpoly-gamma-glutamates.</text>
        <dbReference type="EC" id="3.4.17.21"/>
    </reaction>
</comment>
<comment type="cofactor">
    <cofactor>
        <name>Zn(2+)</name>
        <dbReference type="ChEBI" id="CHEBI:29105"/>
    </cofactor>
    <text>Binds 2 Zn(2+) ions per subunit. Required for NAALADase activity.</text>
</comment>
<comment type="activity regulation">
    <text>The NAALADase and folate hydrolase activities are inhibited by quisqualic acid.</text>
</comment>
<comment type="subunit">
    <text evidence="1">Homodimer.</text>
</comment>
<comment type="subcellular location">
    <subcellularLocation>
        <location evidence="3">Cell membrane</location>
        <topology evidence="3">Single-pass type II membrane protein</topology>
    </subcellularLocation>
</comment>
<comment type="tissue specificity">
    <text>Expressed predominantly in the hippocampal region of the brain and in kidney. Lower levels in the ovary, testis and mandibular gland.</text>
</comment>
<comment type="domain">
    <text>The NAALADase activity is found in the central region, the dipeptidyl peptidase IV type activity in the C-terminal.</text>
</comment>
<comment type="similarity">
    <text evidence="6">Belongs to the peptidase M28 family. M28B subfamily.</text>
</comment>
<comment type="caution">
    <text evidence="7">There are amino acid differences between the sequence shown in fig.1 (PubMed:11210180) and the sequence deposited in the database (AF026380). The sequence from fig.1 shows only 3 conflicts between PubMed:11210180 and PubMed:16141072. These are at AA positions 141, 240 and 287.</text>
</comment>
<accession>O35409</accession>
<accession>Q0VDM5</accession>
<accession>Q9DCC2</accession>
<keyword id="KW-0106">Calcium</keyword>
<keyword id="KW-0121">Carboxypeptidase</keyword>
<keyword id="KW-1003">Cell membrane</keyword>
<keyword id="KW-0224">Dipeptidase</keyword>
<keyword id="KW-0325">Glycoprotein</keyword>
<keyword id="KW-0378">Hydrolase</keyword>
<keyword id="KW-0472">Membrane</keyword>
<keyword id="KW-0479">Metal-binding</keyword>
<keyword id="KW-0482">Metalloprotease</keyword>
<keyword id="KW-0511">Multifunctional enzyme</keyword>
<keyword id="KW-0597">Phosphoprotein</keyword>
<keyword id="KW-0645">Protease</keyword>
<keyword id="KW-1185">Reference proteome</keyword>
<keyword id="KW-0735">Signal-anchor</keyword>
<keyword id="KW-0812">Transmembrane</keyword>
<keyword id="KW-1133">Transmembrane helix</keyword>
<keyword id="KW-0862">Zinc</keyword>
<protein>
    <recommendedName>
        <fullName>Glutamate carboxypeptidase 2</fullName>
        <ecNumber>3.4.17.21</ecNumber>
    </recommendedName>
    <alternativeName>
        <fullName>Folate hydrolase 1</fullName>
    </alternativeName>
    <alternativeName>
        <fullName>Folylpoly-gamma-glutamate carboxypeptidase</fullName>
        <shortName>FGCP</shortName>
    </alternativeName>
    <alternativeName>
        <fullName>Glutamate carboxypeptidase II</fullName>
        <shortName>GCPII</shortName>
    </alternativeName>
    <alternativeName>
        <fullName>Membrane glutamate carboxypeptidase</fullName>
        <shortName>mGCP</shortName>
    </alternativeName>
    <alternativeName>
        <fullName>N-acetylated-alpha-linked acidic dipeptidase I</fullName>
        <shortName>NAALADase I</shortName>
    </alternativeName>
    <alternativeName>
        <fullName>Prostate-specific membrane antigen homolog</fullName>
    </alternativeName>
    <alternativeName>
        <fullName>Pteroylpoly-gamma-glutamate carboxypeptidase</fullName>
    </alternativeName>
</protein>
<reference key="1">
    <citation type="journal article" date="2001" name="Mamm. Genome">
        <title>Cloning, expression, genomic localization, and enzymatic activities of the mouse homolog of prostate-specific membrane antigen/NAALADase/ folate hydrolase.</title>
        <authorList>
            <person name="Bacich D.J."/>
            <person name="Pinto J.T."/>
            <person name="Tong W.P."/>
            <person name="Heston W.D.W."/>
        </authorList>
    </citation>
    <scope>NUCLEOTIDE SEQUENCE [MRNA]</scope>
    <source>
        <strain>NIH Swiss</strain>
        <tissue>Brain</tissue>
    </source>
</reference>
<reference key="2">
    <citation type="journal article" date="2005" name="Science">
        <title>The transcriptional landscape of the mammalian genome.</title>
        <authorList>
            <person name="Carninci P."/>
            <person name="Kasukawa T."/>
            <person name="Katayama S."/>
            <person name="Gough J."/>
            <person name="Frith M.C."/>
            <person name="Maeda N."/>
            <person name="Oyama R."/>
            <person name="Ravasi T."/>
            <person name="Lenhard B."/>
            <person name="Wells C."/>
            <person name="Kodzius R."/>
            <person name="Shimokawa K."/>
            <person name="Bajic V.B."/>
            <person name="Brenner S.E."/>
            <person name="Batalov S."/>
            <person name="Forrest A.R."/>
            <person name="Zavolan M."/>
            <person name="Davis M.J."/>
            <person name="Wilming L.G."/>
            <person name="Aidinis V."/>
            <person name="Allen J.E."/>
            <person name="Ambesi-Impiombato A."/>
            <person name="Apweiler R."/>
            <person name="Aturaliya R.N."/>
            <person name="Bailey T.L."/>
            <person name="Bansal M."/>
            <person name="Baxter L."/>
            <person name="Beisel K.W."/>
            <person name="Bersano T."/>
            <person name="Bono H."/>
            <person name="Chalk A.M."/>
            <person name="Chiu K.P."/>
            <person name="Choudhary V."/>
            <person name="Christoffels A."/>
            <person name="Clutterbuck D.R."/>
            <person name="Crowe M.L."/>
            <person name="Dalla E."/>
            <person name="Dalrymple B.P."/>
            <person name="de Bono B."/>
            <person name="Della Gatta G."/>
            <person name="di Bernardo D."/>
            <person name="Down T."/>
            <person name="Engstrom P."/>
            <person name="Fagiolini M."/>
            <person name="Faulkner G."/>
            <person name="Fletcher C.F."/>
            <person name="Fukushima T."/>
            <person name="Furuno M."/>
            <person name="Futaki S."/>
            <person name="Gariboldi M."/>
            <person name="Georgii-Hemming P."/>
            <person name="Gingeras T.R."/>
            <person name="Gojobori T."/>
            <person name="Green R.E."/>
            <person name="Gustincich S."/>
            <person name="Harbers M."/>
            <person name="Hayashi Y."/>
            <person name="Hensch T.K."/>
            <person name="Hirokawa N."/>
            <person name="Hill D."/>
            <person name="Huminiecki L."/>
            <person name="Iacono M."/>
            <person name="Ikeo K."/>
            <person name="Iwama A."/>
            <person name="Ishikawa T."/>
            <person name="Jakt M."/>
            <person name="Kanapin A."/>
            <person name="Katoh M."/>
            <person name="Kawasawa Y."/>
            <person name="Kelso J."/>
            <person name="Kitamura H."/>
            <person name="Kitano H."/>
            <person name="Kollias G."/>
            <person name="Krishnan S.P."/>
            <person name="Kruger A."/>
            <person name="Kummerfeld S.K."/>
            <person name="Kurochkin I.V."/>
            <person name="Lareau L.F."/>
            <person name="Lazarevic D."/>
            <person name="Lipovich L."/>
            <person name="Liu J."/>
            <person name="Liuni S."/>
            <person name="McWilliam S."/>
            <person name="Madan Babu M."/>
            <person name="Madera M."/>
            <person name="Marchionni L."/>
            <person name="Matsuda H."/>
            <person name="Matsuzawa S."/>
            <person name="Miki H."/>
            <person name="Mignone F."/>
            <person name="Miyake S."/>
            <person name="Morris K."/>
            <person name="Mottagui-Tabar S."/>
            <person name="Mulder N."/>
            <person name="Nakano N."/>
            <person name="Nakauchi H."/>
            <person name="Ng P."/>
            <person name="Nilsson R."/>
            <person name="Nishiguchi S."/>
            <person name="Nishikawa S."/>
            <person name="Nori F."/>
            <person name="Ohara O."/>
            <person name="Okazaki Y."/>
            <person name="Orlando V."/>
            <person name="Pang K.C."/>
            <person name="Pavan W.J."/>
            <person name="Pavesi G."/>
            <person name="Pesole G."/>
            <person name="Petrovsky N."/>
            <person name="Piazza S."/>
            <person name="Reed J."/>
            <person name="Reid J.F."/>
            <person name="Ring B.Z."/>
            <person name="Ringwald M."/>
            <person name="Rost B."/>
            <person name="Ruan Y."/>
            <person name="Salzberg S.L."/>
            <person name="Sandelin A."/>
            <person name="Schneider C."/>
            <person name="Schoenbach C."/>
            <person name="Sekiguchi K."/>
            <person name="Semple C.A."/>
            <person name="Seno S."/>
            <person name="Sessa L."/>
            <person name="Sheng Y."/>
            <person name="Shibata Y."/>
            <person name="Shimada H."/>
            <person name="Shimada K."/>
            <person name="Silva D."/>
            <person name="Sinclair B."/>
            <person name="Sperling S."/>
            <person name="Stupka E."/>
            <person name="Sugiura K."/>
            <person name="Sultana R."/>
            <person name="Takenaka Y."/>
            <person name="Taki K."/>
            <person name="Tammoja K."/>
            <person name="Tan S.L."/>
            <person name="Tang S."/>
            <person name="Taylor M.S."/>
            <person name="Tegner J."/>
            <person name="Teichmann S.A."/>
            <person name="Ueda H.R."/>
            <person name="van Nimwegen E."/>
            <person name="Verardo R."/>
            <person name="Wei C.L."/>
            <person name="Yagi K."/>
            <person name="Yamanishi H."/>
            <person name="Zabarovsky E."/>
            <person name="Zhu S."/>
            <person name="Zimmer A."/>
            <person name="Hide W."/>
            <person name="Bult C."/>
            <person name="Grimmond S.M."/>
            <person name="Teasdale R.D."/>
            <person name="Liu E.T."/>
            <person name="Brusic V."/>
            <person name="Quackenbush J."/>
            <person name="Wahlestedt C."/>
            <person name="Mattick J.S."/>
            <person name="Hume D.A."/>
            <person name="Kai C."/>
            <person name="Sasaki D."/>
            <person name="Tomaru Y."/>
            <person name="Fukuda S."/>
            <person name="Kanamori-Katayama M."/>
            <person name="Suzuki M."/>
            <person name="Aoki J."/>
            <person name="Arakawa T."/>
            <person name="Iida J."/>
            <person name="Imamura K."/>
            <person name="Itoh M."/>
            <person name="Kato T."/>
            <person name="Kawaji H."/>
            <person name="Kawagashira N."/>
            <person name="Kawashima T."/>
            <person name="Kojima M."/>
            <person name="Kondo S."/>
            <person name="Konno H."/>
            <person name="Nakano K."/>
            <person name="Ninomiya N."/>
            <person name="Nishio T."/>
            <person name="Okada M."/>
            <person name="Plessy C."/>
            <person name="Shibata K."/>
            <person name="Shiraki T."/>
            <person name="Suzuki S."/>
            <person name="Tagami M."/>
            <person name="Waki K."/>
            <person name="Watahiki A."/>
            <person name="Okamura-Oho Y."/>
            <person name="Suzuki H."/>
            <person name="Kawai J."/>
            <person name="Hayashizaki Y."/>
        </authorList>
    </citation>
    <scope>NUCLEOTIDE SEQUENCE [LARGE SCALE MRNA]</scope>
    <source>
        <strain>C57BL/6J</strain>
        <tissue>Kidney</tissue>
    </source>
</reference>
<reference key="3">
    <citation type="journal article" date="2004" name="Genome Res.">
        <title>The status, quality, and expansion of the NIH full-length cDNA project: the Mammalian Gene Collection (MGC).</title>
        <authorList>
            <consortium name="The MGC Project Team"/>
        </authorList>
    </citation>
    <scope>NUCLEOTIDE SEQUENCE [LARGE SCALE MRNA]</scope>
</reference>
<reference key="4">
    <citation type="journal article" date="2010" name="Cell">
        <title>A tissue-specific atlas of mouse protein phosphorylation and expression.</title>
        <authorList>
            <person name="Huttlin E.L."/>
            <person name="Jedrychowski M.P."/>
            <person name="Elias J.E."/>
            <person name="Goswami T."/>
            <person name="Rad R."/>
            <person name="Beausoleil S.A."/>
            <person name="Villen J."/>
            <person name="Haas W."/>
            <person name="Sowa M.E."/>
            <person name="Gygi S.P."/>
        </authorList>
    </citation>
    <scope>IDENTIFICATION BY MASS SPECTROMETRY [LARGE SCALE ANALYSIS]</scope>
    <source>
        <tissue>Brain</tissue>
        <tissue>Kidney</tissue>
    </source>
</reference>
<organism>
    <name type="scientific">Mus musculus</name>
    <name type="common">Mouse</name>
    <dbReference type="NCBI Taxonomy" id="10090"/>
    <lineage>
        <taxon>Eukaryota</taxon>
        <taxon>Metazoa</taxon>
        <taxon>Chordata</taxon>
        <taxon>Craniata</taxon>
        <taxon>Vertebrata</taxon>
        <taxon>Euteleostomi</taxon>
        <taxon>Mammalia</taxon>
        <taxon>Eutheria</taxon>
        <taxon>Euarchontoglires</taxon>
        <taxon>Glires</taxon>
        <taxon>Rodentia</taxon>
        <taxon>Myomorpha</taxon>
        <taxon>Muroidea</taxon>
        <taxon>Muridae</taxon>
        <taxon>Murinae</taxon>
        <taxon>Mus</taxon>
        <taxon>Mus</taxon>
    </lineage>
</organism>
<sequence length="752" mass="84574">MWNALQDRDSAEVLGHRQRWLRVGTLVLALTGTFLIGFLFGWFIKPSNEATGNVSHSGMKKEFLHELKAENIKKFLYNFTRTPHLAGTQNNFELAKQIHDQWKEFGLDLVELSHYDVLLSYPNKTHPNYISIINEDGNEIFKTSLSEQPPPGYENISDVVPPYSAFSPQGTPEGDLVYVNYARTEDFFKLEREMKISCSGKIVIARYGKVFRGNMVKNAQLAGAKGMILYSDPADYFVPAVKSYPDGWNLPGGGVQRGNVLNLNGAGDPLTPGYPANEHAYRHELTNAVGLPSIPVHPIGYDDAQKLLEHMGGPAPPDSSWKGGLKVPYNVGPGFAGNFSTQKVKMHIHSYTKVTRIYNVIGTLKGALEPDRYVILGGHRDAWVFGGIDPQSGAAVVHEIVRSFGTLKKKGRRPRRTILFASWDAEEFGLLGSTEWAEEHSRLLQERGVAYINADSSIEGNYTLRVDCTPLMYSLVYNLTKELQSPDEGFEGKSLYDSWKEKSPSPEFIGMPRISKLGSGNDFEVFFQRLGIASGRARYTKNWKTNKVSSYPLYHSVYETYELVVKFYDPTFKYHLTVAQVRGAMVFELANSIVLPFDCQSYAVALKKYADTIYNISMKHPQEMKAYMISFDSLFSAVNNFTDVASKFNQRLQELDKSNPILLRIMNDQLMYLERAFIDPLGLPGRPFYRHIIYAPSSHNKYAGESFPGIYDALFDISSKVNASKAWNEVKRQISIATFTVQAAAETLREVA</sequence>
<evidence type="ECO:0000250" key="1"/>
<evidence type="ECO:0000250" key="2">
    <source>
        <dbReference type="UniProtKB" id="P70627"/>
    </source>
</evidence>
<evidence type="ECO:0000250" key="3">
    <source>
        <dbReference type="UniProtKB" id="Q04609"/>
    </source>
</evidence>
<evidence type="ECO:0000250" key="4">
    <source>
        <dbReference type="UniProtKB" id="Q9Y3Q0"/>
    </source>
</evidence>
<evidence type="ECO:0000255" key="5"/>
<evidence type="ECO:0000305" key="6"/>
<evidence type="ECO:0000305" key="7">
    <source>
    </source>
</evidence>
<name>FOLH1_MOUSE</name>
<proteinExistence type="evidence at protein level"/>